<proteinExistence type="inferred from homology"/>
<evidence type="ECO:0000255" key="1">
    <source>
        <dbReference type="HAMAP-Rule" id="MF_00022"/>
    </source>
</evidence>
<gene>
    <name evidence="1" type="primary">gltX</name>
    <name type="ordered locus">BCE33L0083</name>
</gene>
<feature type="chain" id="PRO_0000119501" description="Glutamate--tRNA ligase">
    <location>
        <begin position="1"/>
        <end position="485"/>
    </location>
</feature>
<feature type="short sequence motif" description="'HIGH' region" evidence="1">
    <location>
        <begin position="11"/>
        <end position="21"/>
    </location>
</feature>
<feature type="short sequence motif" description="'KMSKS' region" evidence="1">
    <location>
        <begin position="252"/>
        <end position="256"/>
    </location>
</feature>
<feature type="binding site" evidence="1">
    <location>
        <position position="255"/>
    </location>
    <ligand>
        <name>ATP</name>
        <dbReference type="ChEBI" id="CHEBI:30616"/>
    </ligand>
</feature>
<dbReference type="EC" id="6.1.1.17" evidence="1"/>
<dbReference type="EMBL" id="CP000001">
    <property type="protein sequence ID" value="AAU20149.1"/>
    <property type="molecule type" value="Genomic_DNA"/>
</dbReference>
<dbReference type="RefSeq" id="WP_000415154.1">
    <property type="nucleotide sequence ID" value="NZ_CP009968.1"/>
</dbReference>
<dbReference type="SMR" id="Q63HB2"/>
<dbReference type="GeneID" id="93010966"/>
<dbReference type="KEGG" id="bcz:BCE33L0083"/>
<dbReference type="PATRIC" id="fig|288681.22.peg.69"/>
<dbReference type="Proteomes" id="UP000002612">
    <property type="component" value="Chromosome"/>
</dbReference>
<dbReference type="GO" id="GO:0005829">
    <property type="term" value="C:cytosol"/>
    <property type="evidence" value="ECO:0007669"/>
    <property type="project" value="TreeGrafter"/>
</dbReference>
<dbReference type="GO" id="GO:0005524">
    <property type="term" value="F:ATP binding"/>
    <property type="evidence" value="ECO:0007669"/>
    <property type="project" value="UniProtKB-UniRule"/>
</dbReference>
<dbReference type="GO" id="GO:0004818">
    <property type="term" value="F:glutamate-tRNA ligase activity"/>
    <property type="evidence" value="ECO:0007669"/>
    <property type="project" value="UniProtKB-UniRule"/>
</dbReference>
<dbReference type="GO" id="GO:0000049">
    <property type="term" value="F:tRNA binding"/>
    <property type="evidence" value="ECO:0007669"/>
    <property type="project" value="InterPro"/>
</dbReference>
<dbReference type="GO" id="GO:0008270">
    <property type="term" value="F:zinc ion binding"/>
    <property type="evidence" value="ECO:0007669"/>
    <property type="project" value="InterPro"/>
</dbReference>
<dbReference type="GO" id="GO:0006424">
    <property type="term" value="P:glutamyl-tRNA aminoacylation"/>
    <property type="evidence" value="ECO:0007669"/>
    <property type="project" value="UniProtKB-UniRule"/>
</dbReference>
<dbReference type="CDD" id="cd00808">
    <property type="entry name" value="GluRS_core"/>
    <property type="match status" value="1"/>
</dbReference>
<dbReference type="FunFam" id="1.10.10.350:FF:000002">
    <property type="entry name" value="Glutamate--tRNA ligase"/>
    <property type="match status" value="1"/>
</dbReference>
<dbReference type="FunFam" id="3.40.50.620:FF:000007">
    <property type="entry name" value="Glutamate--tRNA ligase"/>
    <property type="match status" value="1"/>
</dbReference>
<dbReference type="Gene3D" id="1.10.10.350">
    <property type="match status" value="1"/>
</dbReference>
<dbReference type="Gene3D" id="3.40.50.620">
    <property type="entry name" value="HUPs"/>
    <property type="match status" value="1"/>
</dbReference>
<dbReference type="HAMAP" id="MF_00022">
    <property type="entry name" value="Glu_tRNA_synth_type1"/>
    <property type="match status" value="1"/>
</dbReference>
<dbReference type="InterPro" id="IPR045462">
    <property type="entry name" value="aa-tRNA-synth_I_cd-bd"/>
</dbReference>
<dbReference type="InterPro" id="IPR020751">
    <property type="entry name" value="aa-tRNA-synth_I_codon-bd_sub2"/>
</dbReference>
<dbReference type="InterPro" id="IPR001412">
    <property type="entry name" value="aa-tRNA-synth_I_CS"/>
</dbReference>
<dbReference type="InterPro" id="IPR008925">
    <property type="entry name" value="aa_tRNA-synth_I_cd-bd_sf"/>
</dbReference>
<dbReference type="InterPro" id="IPR004527">
    <property type="entry name" value="Glu-tRNA-ligase_bac/mito"/>
</dbReference>
<dbReference type="InterPro" id="IPR000924">
    <property type="entry name" value="Glu/Gln-tRNA-synth"/>
</dbReference>
<dbReference type="InterPro" id="IPR020058">
    <property type="entry name" value="Glu/Gln-tRNA-synth_Ib_cat-dom"/>
</dbReference>
<dbReference type="InterPro" id="IPR049940">
    <property type="entry name" value="GluQ/Sye"/>
</dbReference>
<dbReference type="InterPro" id="IPR033910">
    <property type="entry name" value="GluRS_core"/>
</dbReference>
<dbReference type="InterPro" id="IPR014729">
    <property type="entry name" value="Rossmann-like_a/b/a_fold"/>
</dbReference>
<dbReference type="NCBIfam" id="TIGR00464">
    <property type="entry name" value="gltX_bact"/>
    <property type="match status" value="1"/>
</dbReference>
<dbReference type="PANTHER" id="PTHR43311">
    <property type="entry name" value="GLUTAMATE--TRNA LIGASE"/>
    <property type="match status" value="1"/>
</dbReference>
<dbReference type="PANTHER" id="PTHR43311:SF2">
    <property type="entry name" value="GLUTAMATE--TRNA LIGASE, MITOCHONDRIAL-RELATED"/>
    <property type="match status" value="1"/>
</dbReference>
<dbReference type="Pfam" id="PF19269">
    <property type="entry name" value="Anticodon_2"/>
    <property type="match status" value="1"/>
</dbReference>
<dbReference type="Pfam" id="PF00749">
    <property type="entry name" value="tRNA-synt_1c"/>
    <property type="match status" value="1"/>
</dbReference>
<dbReference type="PRINTS" id="PR00987">
    <property type="entry name" value="TRNASYNTHGLU"/>
</dbReference>
<dbReference type="SUPFAM" id="SSF48163">
    <property type="entry name" value="An anticodon-binding domain of class I aminoacyl-tRNA synthetases"/>
    <property type="match status" value="1"/>
</dbReference>
<dbReference type="SUPFAM" id="SSF52374">
    <property type="entry name" value="Nucleotidylyl transferase"/>
    <property type="match status" value="1"/>
</dbReference>
<dbReference type="PROSITE" id="PS00178">
    <property type="entry name" value="AA_TRNA_LIGASE_I"/>
    <property type="match status" value="1"/>
</dbReference>
<name>SYE_BACCZ</name>
<organism>
    <name type="scientific">Bacillus cereus (strain ZK / E33L)</name>
    <dbReference type="NCBI Taxonomy" id="288681"/>
    <lineage>
        <taxon>Bacteria</taxon>
        <taxon>Bacillati</taxon>
        <taxon>Bacillota</taxon>
        <taxon>Bacilli</taxon>
        <taxon>Bacillales</taxon>
        <taxon>Bacillaceae</taxon>
        <taxon>Bacillus</taxon>
        <taxon>Bacillus cereus group</taxon>
    </lineage>
</organism>
<protein>
    <recommendedName>
        <fullName evidence="1">Glutamate--tRNA ligase</fullName>
        <ecNumber evidence="1">6.1.1.17</ecNumber>
    </recommendedName>
    <alternativeName>
        <fullName evidence="1">Glutamyl-tRNA synthetase</fullName>
        <shortName evidence="1">GluRS</shortName>
    </alternativeName>
</protein>
<sequence>MEKQVRVRYAPSPTGHLHIGNARTALFNYLFARHQDGKFIIRIEDTDVKRNVAGGEESQLKYLKWLGMDWDEGVDVGGEFGPYRQTERLDIYKKLYEDLLERGLAYKCYMTEEELEAEREGQIARGETPRYAGNHRDLTEAQVKEFEAEGRIPSIRFRVPADRDYTFKDIVKDEVAFHSNDFGDFVIVKKDGIPTYNFAVAVDDHLMEITHVLRGDDHISNTPKQMMIYEAFGWDIPQFGHMTLIVNESRKKLSKRDESIIQFIEQYKELGYLPEAIFNFIALLGWSPVGEEEIFSQEEFIKMFDAARLSKSPALFDSQKLKWMNNQYMKKQDLDTVVELSLPHLVKAGRIGETLSEQEQAWIRDVIALYHEQMSFGAEIVELSEMFFKDHVDYEEEGQEVLKGEQVPEVLRAFAGQVEALEAMEPAAIKAAIKAVQKETGHKGKNLFMPIRVATTGQTHGPELPNAIALLGKEKVLNRLQKVIG</sequence>
<accession>Q63HB2</accession>
<reference key="1">
    <citation type="journal article" date="2006" name="J. Bacteriol.">
        <title>Pathogenomic sequence analysis of Bacillus cereus and Bacillus thuringiensis isolates closely related to Bacillus anthracis.</title>
        <authorList>
            <person name="Han C.S."/>
            <person name="Xie G."/>
            <person name="Challacombe J.F."/>
            <person name="Altherr M.R."/>
            <person name="Bhotika S.S."/>
            <person name="Bruce D."/>
            <person name="Campbell C.S."/>
            <person name="Campbell M.L."/>
            <person name="Chen J."/>
            <person name="Chertkov O."/>
            <person name="Cleland C."/>
            <person name="Dimitrijevic M."/>
            <person name="Doggett N.A."/>
            <person name="Fawcett J.J."/>
            <person name="Glavina T."/>
            <person name="Goodwin L.A."/>
            <person name="Hill K.K."/>
            <person name="Hitchcock P."/>
            <person name="Jackson P.J."/>
            <person name="Keim P."/>
            <person name="Kewalramani A.R."/>
            <person name="Longmire J."/>
            <person name="Lucas S."/>
            <person name="Malfatti S."/>
            <person name="McMurry K."/>
            <person name="Meincke L.J."/>
            <person name="Misra M."/>
            <person name="Moseman B.L."/>
            <person name="Mundt M."/>
            <person name="Munk A.C."/>
            <person name="Okinaka R.T."/>
            <person name="Parson-Quintana B."/>
            <person name="Reilly L.P."/>
            <person name="Richardson P."/>
            <person name="Robinson D.L."/>
            <person name="Rubin E."/>
            <person name="Saunders E."/>
            <person name="Tapia R."/>
            <person name="Tesmer J.G."/>
            <person name="Thayer N."/>
            <person name="Thompson L.S."/>
            <person name="Tice H."/>
            <person name="Ticknor L.O."/>
            <person name="Wills P.L."/>
            <person name="Brettin T.S."/>
            <person name="Gilna P."/>
        </authorList>
    </citation>
    <scope>NUCLEOTIDE SEQUENCE [LARGE SCALE GENOMIC DNA]</scope>
    <source>
        <strain>ZK / E33L</strain>
    </source>
</reference>
<keyword id="KW-0030">Aminoacyl-tRNA synthetase</keyword>
<keyword id="KW-0067">ATP-binding</keyword>
<keyword id="KW-0963">Cytoplasm</keyword>
<keyword id="KW-0436">Ligase</keyword>
<keyword id="KW-0547">Nucleotide-binding</keyword>
<keyword id="KW-0648">Protein biosynthesis</keyword>
<comment type="function">
    <text evidence="1">Catalyzes the attachment of glutamate to tRNA(Glu) in a two-step reaction: glutamate is first activated by ATP to form Glu-AMP and then transferred to the acceptor end of tRNA(Glu).</text>
</comment>
<comment type="catalytic activity">
    <reaction evidence="1">
        <text>tRNA(Glu) + L-glutamate + ATP = L-glutamyl-tRNA(Glu) + AMP + diphosphate</text>
        <dbReference type="Rhea" id="RHEA:23540"/>
        <dbReference type="Rhea" id="RHEA-COMP:9663"/>
        <dbReference type="Rhea" id="RHEA-COMP:9680"/>
        <dbReference type="ChEBI" id="CHEBI:29985"/>
        <dbReference type="ChEBI" id="CHEBI:30616"/>
        <dbReference type="ChEBI" id="CHEBI:33019"/>
        <dbReference type="ChEBI" id="CHEBI:78442"/>
        <dbReference type="ChEBI" id="CHEBI:78520"/>
        <dbReference type="ChEBI" id="CHEBI:456215"/>
        <dbReference type="EC" id="6.1.1.17"/>
    </reaction>
</comment>
<comment type="subunit">
    <text evidence="1">Monomer.</text>
</comment>
<comment type="subcellular location">
    <subcellularLocation>
        <location evidence="1">Cytoplasm</location>
    </subcellularLocation>
</comment>
<comment type="similarity">
    <text evidence="1">Belongs to the class-I aminoacyl-tRNA synthetase family. Glutamate--tRNA ligase type 1 subfamily.</text>
</comment>